<feature type="chain" id="PRO_0000086196" description="Pseudokinase OPG198">
    <location>
        <begin position="1"/>
        <end position="283"/>
    </location>
</feature>
<feature type="domain" description="Protein kinase" evidence="2">
    <location>
        <begin position="1"/>
        <end position="283"/>
    </location>
</feature>
<feature type="binding site" evidence="2">
    <location>
        <position position="1"/>
    </location>
    <ligand>
        <name>ATP</name>
        <dbReference type="ChEBI" id="CHEBI:30616"/>
    </ligand>
</feature>
<feature type="binding site" evidence="2">
    <location>
        <position position="30"/>
    </location>
    <ligand>
        <name>ATP</name>
        <dbReference type="ChEBI" id="CHEBI:30616"/>
    </ligand>
</feature>
<dbReference type="EMBL" id="M35027">
    <property type="protein sequence ID" value="AAA48209.1"/>
    <property type="molecule type" value="Genomic_DNA"/>
</dbReference>
<dbReference type="PIR" id="B42527">
    <property type="entry name" value="TVVZB2"/>
</dbReference>
<dbReference type="SMR" id="P21098"/>
<dbReference type="Proteomes" id="UP000008269">
    <property type="component" value="Segment"/>
</dbReference>
<dbReference type="GO" id="GO:0042025">
    <property type="term" value="C:host cell nucleus"/>
    <property type="evidence" value="ECO:0007669"/>
    <property type="project" value="UniProtKB-SubCell"/>
</dbReference>
<dbReference type="GO" id="GO:0005524">
    <property type="term" value="F:ATP binding"/>
    <property type="evidence" value="ECO:0007669"/>
    <property type="project" value="UniProtKB-KW"/>
</dbReference>
<dbReference type="GO" id="GO:0004674">
    <property type="term" value="F:protein serine/threonine kinase activity"/>
    <property type="evidence" value="ECO:0007669"/>
    <property type="project" value="UniProtKB-EC"/>
</dbReference>
<dbReference type="Gene3D" id="1.10.510.10">
    <property type="entry name" value="Transferase(Phosphotransferase) domain 1"/>
    <property type="match status" value="1"/>
</dbReference>
<dbReference type="InterPro" id="IPR050235">
    <property type="entry name" value="CK1_Ser-Thr_kinase"/>
</dbReference>
<dbReference type="InterPro" id="IPR011009">
    <property type="entry name" value="Kinase-like_dom_sf"/>
</dbReference>
<dbReference type="InterPro" id="IPR000719">
    <property type="entry name" value="Prot_kinase_dom"/>
</dbReference>
<dbReference type="InterPro" id="IPR001245">
    <property type="entry name" value="Ser-Thr/Tyr_kinase_cat_dom"/>
</dbReference>
<dbReference type="PANTHER" id="PTHR11909">
    <property type="entry name" value="CASEIN KINASE-RELATED"/>
    <property type="match status" value="1"/>
</dbReference>
<dbReference type="Pfam" id="PF07714">
    <property type="entry name" value="PK_Tyr_Ser-Thr"/>
    <property type="match status" value="1"/>
</dbReference>
<dbReference type="SUPFAM" id="SSF56112">
    <property type="entry name" value="Protein kinase-like (PK-like)"/>
    <property type="match status" value="1"/>
</dbReference>
<dbReference type="PROSITE" id="PS50011">
    <property type="entry name" value="PROTEIN_KINASE_DOM"/>
    <property type="match status" value="1"/>
</dbReference>
<protein>
    <recommendedName>
        <fullName>Pseudokinase OPG198</fullName>
    </recommendedName>
</protein>
<organismHost>
    <name type="scientific">Homo sapiens</name>
    <name type="common">Human</name>
    <dbReference type="NCBI Taxonomy" id="9606"/>
</organismHost>
<name>KRB2_VACCC</name>
<evidence type="ECO:0000250" key="1">
    <source>
        <dbReference type="UniProtKB" id="P24362"/>
    </source>
</evidence>
<evidence type="ECO:0000255" key="2">
    <source>
        <dbReference type="PROSITE-ProRule" id="PRU00159"/>
    </source>
</evidence>
<keyword id="KW-0067">ATP-binding</keyword>
<keyword id="KW-0244">Early protein</keyword>
<keyword id="KW-1048">Host nucleus</keyword>
<keyword id="KW-0547">Nucleotide-binding</keyword>
<keyword id="KW-1185">Reference proteome</keyword>
<gene>
    <name type="primary">OPG198</name>
    <name type="ORF">B12R</name>
</gene>
<accession>P21098</accession>
<proteinExistence type="inferred from homology"/>
<sequence>MESFKYCFDNDGKKWIIGNTLYSGNSILYKVRKNFTSSFYNYVMKIDHKSHKPLLSEIRFYISVLDPLTIDNWTRERGIKYLAIPDLYGIGETDDYMFFVIKNLGRVFAPKDTESVFEACVTMINTLEFIHSRGFTHGKIEPRNILIRNKRLSLIDYSRTNKLYKSGNSHIDYNEDMITSGNINYMCVDNHLGATVSRRGDLEMLGYCMIEWFGGKLPWKNESSIKVIKQKKEYKKFIATFFEDCFPEGNEPLELVRYIELVYTLDYSQTPNYDRLRRLFIQD</sequence>
<organism>
    <name type="scientific">Vaccinia virus (strain Copenhagen)</name>
    <name type="common">VACV</name>
    <dbReference type="NCBI Taxonomy" id="10249"/>
    <lineage>
        <taxon>Viruses</taxon>
        <taxon>Varidnaviria</taxon>
        <taxon>Bamfordvirae</taxon>
        <taxon>Nucleocytoviricota</taxon>
        <taxon>Pokkesviricetes</taxon>
        <taxon>Chitovirales</taxon>
        <taxon>Poxviridae</taxon>
        <taxon>Chordopoxvirinae</taxon>
        <taxon>Orthopoxvirus</taxon>
        <taxon>Vaccinia virus</taxon>
    </lineage>
</organism>
<comment type="function">
    <text evidence="1">Pseudokinase that plays a role in viral DNA replication repression by activating the antiviral protein BANF1 and inhibiting the activity of host VRK1, a cellular modulator of BANF1.</text>
</comment>
<comment type="activity regulation">
    <text evidence="1">Both catalytically active kinases B1/VPK1 and host VRK2 repress B12 inhibitory activity in a B1/VPK1 deletion mutant strain.</text>
</comment>
<comment type="subunit">
    <text evidence="1">Interacts with B1/VPK1. Interacts with host VRK1. Interacts with host VRK2.</text>
</comment>
<comment type="subcellular location">
    <subcellularLocation>
        <location evidence="1">Host nucleus</location>
    </subcellularLocation>
</comment>
<comment type="similarity">
    <text evidence="2">Belongs to the protein kinase superfamily. Ser/Thr protein kinase family. Poxviruses subfamily.</text>
</comment>
<reference key="1">
    <citation type="journal article" date="1990" name="Virology">
        <title>The complete DNA sequence of vaccinia virus.</title>
        <authorList>
            <person name="Goebel S.J."/>
            <person name="Johnson G.P."/>
            <person name="Perkus M.E."/>
            <person name="Davis S.W."/>
            <person name="Winslow J.P."/>
            <person name="Paoletti E."/>
        </authorList>
    </citation>
    <scope>NUCLEOTIDE SEQUENCE [LARGE SCALE GENOMIC DNA]</scope>
</reference>
<reference key="2">
    <citation type="journal article" date="1990" name="Virology">
        <title>Appendix to 'The complete DNA sequence of vaccinia virus'.</title>
        <authorList>
            <person name="Goebel S.J."/>
            <person name="Johnson G.P."/>
            <person name="Perkus M.E."/>
            <person name="Davis S.W."/>
            <person name="Winslow J.P."/>
            <person name="Paoletti E."/>
        </authorList>
    </citation>
    <scope>COMPLETE GENOME</scope>
</reference>